<reference key="1">
    <citation type="journal article" date="1996" name="DNA Res.">
        <title>A 570-kb DNA sequence of the Escherichia coli K-12 genome corresponding to the 28.0-40.1 min region on the linkage map.</title>
        <authorList>
            <person name="Aiba H."/>
            <person name="Baba T."/>
            <person name="Fujita K."/>
            <person name="Hayashi K."/>
            <person name="Inada T."/>
            <person name="Isono K."/>
            <person name="Itoh T."/>
            <person name="Kasai H."/>
            <person name="Kashimoto K."/>
            <person name="Kimura S."/>
            <person name="Kitakawa M."/>
            <person name="Kitagawa M."/>
            <person name="Makino K."/>
            <person name="Miki T."/>
            <person name="Mizobuchi K."/>
            <person name="Mori H."/>
            <person name="Mori T."/>
            <person name="Motomura K."/>
            <person name="Nakade S."/>
            <person name="Nakamura Y."/>
            <person name="Nashimoto H."/>
            <person name="Nishio Y."/>
            <person name="Oshima T."/>
            <person name="Saito N."/>
            <person name="Sampei G."/>
            <person name="Seki Y."/>
            <person name="Sivasundaram S."/>
            <person name="Tagami H."/>
            <person name="Takeda J."/>
            <person name="Takemoto K."/>
            <person name="Takeuchi Y."/>
            <person name="Wada C."/>
            <person name="Yamamoto Y."/>
            <person name="Horiuchi T."/>
        </authorList>
    </citation>
    <scope>NUCLEOTIDE SEQUENCE [LARGE SCALE GENOMIC DNA]</scope>
    <source>
        <strain>K12 / W3110 / ATCC 27325 / DSM 5911</strain>
    </source>
</reference>
<reference key="2">
    <citation type="journal article" date="1997" name="Science">
        <title>The complete genome sequence of Escherichia coli K-12.</title>
        <authorList>
            <person name="Blattner F.R."/>
            <person name="Plunkett G. III"/>
            <person name="Bloch C.A."/>
            <person name="Perna N.T."/>
            <person name="Burland V."/>
            <person name="Riley M."/>
            <person name="Collado-Vides J."/>
            <person name="Glasner J.D."/>
            <person name="Rode C.K."/>
            <person name="Mayhew G.F."/>
            <person name="Gregor J."/>
            <person name="Davis N.W."/>
            <person name="Kirkpatrick H.A."/>
            <person name="Goeden M.A."/>
            <person name="Rose D.J."/>
            <person name="Mau B."/>
            <person name="Shao Y."/>
        </authorList>
    </citation>
    <scope>NUCLEOTIDE SEQUENCE [LARGE SCALE GENOMIC DNA]</scope>
    <source>
        <strain>K12 / MG1655 / ATCC 47076</strain>
    </source>
</reference>
<reference key="3">
    <citation type="journal article" date="2006" name="Mol. Syst. Biol.">
        <title>Highly accurate genome sequences of Escherichia coli K-12 strains MG1655 and W3110.</title>
        <authorList>
            <person name="Hayashi K."/>
            <person name="Morooka N."/>
            <person name="Yamamoto Y."/>
            <person name="Fujita K."/>
            <person name="Isono K."/>
            <person name="Choi S."/>
            <person name="Ohtsubo E."/>
            <person name="Baba T."/>
            <person name="Wanner B.L."/>
            <person name="Mori H."/>
            <person name="Horiuchi T."/>
        </authorList>
    </citation>
    <scope>NUCLEOTIDE SEQUENCE [LARGE SCALE GENOMIC DNA]</scope>
    <source>
        <strain>K12 / W3110 / ATCC 27325 / DSM 5911</strain>
    </source>
</reference>
<comment type="function">
    <text evidence="1">Component of the spanin complex that disrupts the outer membrane and causes cell lysis during virus exit. The spanin complex conducts the final step in cell lysis by disrupting the outer membrane after holin and endolysin action have permeabilized the inner membrane and degraded the host peptidoglycans (By similarity).</text>
</comment>
<comment type="subunit">
    <text evidence="1">Homodimer; disulfide-linked. Interacts (via C-terminus) with RZ (via C-terminus). Part of the spanin complex which spans the entire periplasmic space. The spanin complex is composed of spanin, inner membrane subunit and spanin, outer membrane subunit (By similarity).</text>
</comment>
<comment type="subcellular location">
    <subcellularLocation>
        <location evidence="1">Cell outer membrane</location>
        <topology evidence="2">Lipid-anchor</topology>
        <orientation evidence="1">Periplasmic side</orientation>
    </subcellularLocation>
</comment>
<comment type="similarity">
    <text evidence="3">Belongs to the lambdalikevirus o-spanin family.</text>
</comment>
<name>RZOR_ECOLI</name>
<organism>
    <name type="scientific">Escherichia coli (strain K12)</name>
    <dbReference type="NCBI Taxonomy" id="83333"/>
    <lineage>
        <taxon>Bacteria</taxon>
        <taxon>Pseudomonadati</taxon>
        <taxon>Pseudomonadota</taxon>
        <taxon>Gammaproteobacteria</taxon>
        <taxon>Enterobacterales</taxon>
        <taxon>Enterobacteriaceae</taxon>
        <taxon>Escherichia</taxon>
    </lineage>
</organism>
<dbReference type="EMBL" id="U00096">
    <property type="protein sequence ID" value="ABD18660.1"/>
    <property type="molecule type" value="Genomic_DNA"/>
</dbReference>
<dbReference type="EMBL" id="AP009048">
    <property type="protein sequence ID" value="BAE76416.1"/>
    <property type="molecule type" value="Genomic_DNA"/>
</dbReference>
<dbReference type="RefSeq" id="YP_588452.1">
    <property type="nucleotide sequence ID" value="NC_000913.3"/>
</dbReference>
<dbReference type="SMR" id="P58042"/>
<dbReference type="BioGRID" id="4260160">
    <property type="interactions" value="14"/>
</dbReference>
<dbReference type="FunCoup" id="P58042">
    <property type="interactions" value="215"/>
</dbReference>
<dbReference type="STRING" id="511145.b4528"/>
<dbReference type="PaxDb" id="511145-b4528"/>
<dbReference type="DNASU" id="1450262"/>
<dbReference type="EnsemblBacteria" id="ABD18660">
    <property type="protein sequence ID" value="ABD18660"/>
    <property type="gene ID" value="b4528"/>
</dbReference>
<dbReference type="GeneID" id="1450262"/>
<dbReference type="KEGG" id="ecj:JW5213"/>
<dbReference type="KEGG" id="eco:b4528"/>
<dbReference type="HOGENOM" id="CLU_146388_1_0_6"/>
<dbReference type="InParanoid" id="P58042"/>
<dbReference type="OMA" id="LKMMFCV"/>
<dbReference type="BioCyc" id="EcoCyc:MONOMER0-2671"/>
<dbReference type="PRO" id="PR:P58042"/>
<dbReference type="Proteomes" id="UP000000625">
    <property type="component" value="Chromosome"/>
</dbReference>
<dbReference type="GO" id="GO:0009279">
    <property type="term" value="C:cell outer membrane"/>
    <property type="evidence" value="ECO:0007669"/>
    <property type="project" value="UniProtKB-SubCell"/>
</dbReference>
<dbReference type="GO" id="GO:0044659">
    <property type="term" value="P:viral release from host cell by cytolysis"/>
    <property type="evidence" value="ECO:0007669"/>
    <property type="project" value="InterPro"/>
</dbReference>
<dbReference type="InterPro" id="IPR010346">
    <property type="entry name" value="O-spanin"/>
</dbReference>
<dbReference type="Pfam" id="PF06085">
    <property type="entry name" value="Rz1"/>
    <property type="match status" value="1"/>
</dbReference>
<dbReference type="PROSITE" id="PS51257">
    <property type="entry name" value="PROKAR_LIPOPROTEIN"/>
    <property type="match status" value="1"/>
</dbReference>
<protein>
    <recommendedName>
        <fullName evidence="3">Prophage outer membrane lipoprotein RzoR</fullName>
        <shortName>o-spanin</shortName>
    </recommendedName>
    <alternativeName>
        <fullName>Outer membrane lipoprotein Rz1 from lambdoid prophage Rac</fullName>
    </alternativeName>
    <alternativeName>
        <fullName>Spanin from lambdoid prophage Rac, outer membrane subunit</fullName>
    </alternativeName>
</protein>
<gene>
    <name type="primary">rzoR</name>
    <name type="ordered locus">b4528</name>
    <name type="ordered locus">JW5213</name>
</gene>
<accession>P58042</accession>
<accession>Q2EER8</accession>
<accession>Q2MBE0</accession>
<feature type="signal peptide" evidence="2">
    <location>
        <begin position="1"/>
        <end position="19"/>
    </location>
</feature>
<feature type="chain" id="PRO_0000003366" description="Prophage outer membrane lipoprotein RzoR">
    <location>
        <begin position="20"/>
        <end position="61"/>
    </location>
</feature>
<feature type="lipid moiety-binding region" description="N-palmitoyl cysteine" evidence="2">
    <location>
        <position position="20"/>
    </location>
</feature>
<feature type="lipid moiety-binding region" description="S-diacylglycerol cysteine" evidence="2">
    <location>
        <position position="20"/>
    </location>
</feature>
<feature type="disulfide bond" description="Interchain" evidence="1">
    <location>
        <position position="29"/>
    </location>
</feature>
<evidence type="ECO:0000250" key="1"/>
<evidence type="ECO:0000255" key="2">
    <source>
        <dbReference type="PROSITE-ProRule" id="PRU00303"/>
    </source>
</evidence>
<evidence type="ECO:0000305" key="3"/>
<sequence length="61" mass="6761">MRKLKMMLCVMMLPLVVVGCTSKQSVSQCVKPPPPPAWIMQPPPDWQTPLNGIISPSGNDW</sequence>
<keyword id="KW-0998">Cell outer membrane</keyword>
<keyword id="KW-0204">Cytolysis</keyword>
<keyword id="KW-1015">Disulfide bond</keyword>
<keyword id="KW-0578">Host cell lysis by virus</keyword>
<keyword id="KW-0449">Lipoprotein</keyword>
<keyword id="KW-0472">Membrane</keyword>
<keyword id="KW-0564">Palmitate</keyword>
<keyword id="KW-1185">Reference proteome</keyword>
<keyword id="KW-0732">Signal</keyword>
<keyword id="KW-1188">Viral release from host cell</keyword>
<proteinExistence type="inferred from homology"/>